<keyword id="KW-0520">NAD</keyword>
<keyword id="KW-0560">Oxidoreductase</keyword>
<proteinExistence type="inferred from homology"/>
<reference key="1">
    <citation type="journal article" date="2006" name="J. Bacteriol.">
        <title>Pathogenomic sequence analysis of Bacillus cereus and Bacillus thuringiensis isolates closely related to Bacillus anthracis.</title>
        <authorList>
            <person name="Han C.S."/>
            <person name="Xie G."/>
            <person name="Challacombe J.F."/>
            <person name="Altherr M.R."/>
            <person name="Bhotika S.S."/>
            <person name="Bruce D."/>
            <person name="Campbell C.S."/>
            <person name="Campbell M.L."/>
            <person name="Chen J."/>
            <person name="Chertkov O."/>
            <person name="Cleland C."/>
            <person name="Dimitrijevic M."/>
            <person name="Doggett N.A."/>
            <person name="Fawcett J.J."/>
            <person name="Glavina T."/>
            <person name="Goodwin L.A."/>
            <person name="Hill K.K."/>
            <person name="Hitchcock P."/>
            <person name="Jackson P.J."/>
            <person name="Keim P."/>
            <person name="Kewalramani A.R."/>
            <person name="Longmire J."/>
            <person name="Lucas S."/>
            <person name="Malfatti S."/>
            <person name="McMurry K."/>
            <person name="Meincke L.J."/>
            <person name="Misra M."/>
            <person name="Moseman B.L."/>
            <person name="Mundt M."/>
            <person name="Munk A.C."/>
            <person name="Okinaka R.T."/>
            <person name="Parson-Quintana B."/>
            <person name="Reilly L.P."/>
            <person name="Richardson P."/>
            <person name="Robinson D.L."/>
            <person name="Rubin E."/>
            <person name="Saunders E."/>
            <person name="Tapia R."/>
            <person name="Tesmer J.G."/>
            <person name="Thayer N."/>
            <person name="Thompson L.S."/>
            <person name="Tice H."/>
            <person name="Ticknor L.O."/>
            <person name="Wills P.L."/>
            <person name="Brettin T.S."/>
            <person name="Gilna P."/>
        </authorList>
    </citation>
    <scope>NUCLEOTIDE SEQUENCE [LARGE SCALE GENOMIC DNA]</scope>
    <source>
        <strain>97-27</strain>
    </source>
</reference>
<gene>
    <name evidence="1" type="primary">rocA</name>
    <name type="ordered locus">BT9727_0279</name>
</gene>
<organism>
    <name type="scientific">Bacillus thuringiensis subsp. konkukian (strain 97-27)</name>
    <dbReference type="NCBI Taxonomy" id="281309"/>
    <lineage>
        <taxon>Bacteria</taxon>
        <taxon>Bacillati</taxon>
        <taxon>Bacillota</taxon>
        <taxon>Bacilli</taxon>
        <taxon>Bacillales</taxon>
        <taxon>Bacillaceae</taxon>
        <taxon>Bacillus</taxon>
        <taxon>Bacillus cereus group</taxon>
    </lineage>
</organism>
<accession>Q6HP91</accession>
<name>ROCA_BACHK</name>
<evidence type="ECO:0000255" key="1">
    <source>
        <dbReference type="HAMAP-Rule" id="MF_00733"/>
    </source>
</evidence>
<feature type="chain" id="PRO_0000056509" description="1-pyrroline-5-carboxylate dehydrogenase">
    <location>
        <begin position="1"/>
        <end position="515"/>
    </location>
</feature>
<feature type="active site" evidence="1">
    <location>
        <position position="286"/>
    </location>
</feature>
<feature type="active site" evidence="1">
    <location>
        <position position="320"/>
    </location>
</feature>
<dbReference type="EC" id="1.2.1.88" evidence="1"/>
<dbReference type="EMBL" id="AE017355">
    <property type="protein sequence ID" value="AAT62289.1"/>
    <property type="molecule type" value="Genomic_DNA"/>
</dbReference>
<dbReference type="RefSeq" id="YP_034629.1">
    <property type="nucleotide sequence ID" value="NC_005957.1"/>
</dbReference>
<dbReference type="SMR" id="Q6HP91"/>
<dbReference type="KEGG" id="btk:BT9727_0279"/>
<dbReference type="PATRIC" id="fig|281309.8.peg.297"/>
<dbReference type="HOGENOM" id="CLU_005391_0_0_9"/>
<dbReference type="UniPathway" id="UPA00261">
    <property type="reaction ID" value="UER00374"/>
</dbReference>
<dbReference type="Proteomes" id="UP000001301">
    <property type="component" value="Chromosome"/>
</dbReference>
<dbReference type="GO" id="GO:0009898">
    <property type="term" value="C:cytoplasmic side of plasma membrane"/>
    <property type="evidence" value="ECO:0007669"/>
    <property type="project" value="TreeGrafter"/>
</dbReference>
<dbReference type="GO" id="GO:0003842">
    <property type="term" value="F:1-pyrroline-5-carboxylate dehydrogenase activity"/>
    <property type="evidence" value="ECO:0007669"/>
    <property type="project" value="UniProtKB-UniRule"/>
</dbReference>
<dbReference type="GO" id="GO:0006537">
    <property type="term" value="P:glutamate biosynthetic process"/>
    <property type="evidence" value="ECO:0007669"/>
    <property type="project" value="UniProtKB-UniRule"/>
</dbReference>
<dbReference type="GO" id="GO:0010133">
    <property type="term" value="P:proline catabolic process to glutamate"/>
    <property type="evidence" value="ECO:0007669"/>
    <property type="project" value="UniProtKB-UniPathway"/>
</dbReference>
<dbReference type="CDD" id="cd07124">
    <property type="entry name" value="ALDH_PutA-P5CDH-RocA"/>
    <property type="match status" value="1"/>
</dbReference>
<dbReference type="FunFam" id="3.40.309.10:FF:000005">
    <property type="entry name" value="1-pyrroline-5-carboxylate dehydrogenase 1"/>
    <property type="match status" value="1"/>
</dbReference>
<dbReference type="FunFam" id="3.40.605.10:FF:000045">
    <property type="entry name" value="1-pyrroline-5-carboxylate dehydrogenase 1"/>
    <property type="match status" value="1"/>
</dbReference>
<dbReference type="Gene3D" id="3.40.605.10">
    <property type="entry name" value="Aldehyde Dehydrogenase, Chain A, domain 1"/>
    <property type="match status" value="1"/>
</dbReference>
<dbReference type="Gene3D" id="3.40.309.10">
    <property type="entry name" value="Aldehyde Dehydrogenase, Chain A, domain 2"/>
    <property type="match status" value="1"/>
</dbReference>
<dbReference type="HAMAP" id="MF_00733">
    <property type="entry name" value="RocA"/>
    <property type="match status" value="1"/>
</dbReference>
<dbReference type="InterPro" id="IPR016161">
    <property type="entry name" value="Ald_DH/histidinol_DH"/>
</dbReference>
<dbReference type="InterPro" id="IPR016163">
    <property type="entry name" value="Ald_DH_C"/>
</dbReference>
<dbReference type="InterPro" id="IPR016160">
    <property type="entry name" value="Ald_DH_CS_CYS"/>
</dbReference>
<dbReference type="InterPro" id="IPR029510">
    <property type="entry name" value="Ald_DH_CS_GLU"/>
</dbReference>
<dbReference type="InterPro" id="IPR016162">
    <property type="entry name" value="Ald_DH_N"/>
</dbReference>
<dbReference type="InterPro" id="IPR015590">
    <property type="entry name" value="Aldehyde_DH_dom"/>
</dbReference>
<dbReference type="InterPro" id="IPR050485">
    <property type="entry name" value="Proline_metab_enzyme"/>
</dbReference>
<dbReference type="InterPro" id="IPR005932">
    <property type="entry name" value="RocA"/>
</dbReference>
<dbReference type="InterPro" id="IPR047597">
    <property type="entry name" value="RocA_bacillales"/>
</dbReference>
<dbReference type="NCBIfam" id="TIGR01237">
    <property type="entry name" value="D1pyr5carbox2"/>
    <property type="match status" value="1"/>
</dbReference>
<dbReference type="NCBIfam" id="NF002852">
    <property type="entry name" value="PRK03137.1"/>
    <property type="match status" value="1"/>
</dbReference>
<dbReference type="PANTHER" id="PTHR42862">
    <property type="entry name" value="DELTA-1-PYRROLINE-5-CARBOXYLATE DEHYDROGENASE 1, ISOFORM A-RELATED"/>
    <property type="match status" value="1"/>
</dbReference>
<dbReference type="PANTHER" id="PTHR42862:SF1">
    <property type="entry name" value="DELTA-1-PYRROLINE-5-CARBOXYLATE DEHYDROGENASE 2, ISOFORM A-RELATED"/>
    <property type="match status" value="1"/>
</dbReference>
<dbReference type="Pfam" id="PF00171">
    <property type="entry name" value="Aldedh"/>
    <property type="match status" value="1"/>
</dbReference>
<dbReference type="SUPFAM" id="SSF53720">
    <property type="entry name" value="ALDH-like"/>
    <property type="match status" value="1"/>
</dbReference>
<dbReference type="PROSITE" id="PS00070">
    <property type="entry name" value="ALDEHYDE_DEHYDR_CYS"/>
    <property type="match status" value="1"/>
</dbReference>
<dbReference type="PROSITE" id="PS00687">
    <property type="entry name" value="ALDEHYDE_DEHYDR_GLU"/>
    <property type="match status" value="1"/>
</dbReference>
<sequence length="515" mass="56225">MVVAYKHEPFTDFSVEANKLAFEEGLKKVESYLGQDYPLIIGGEKITTEDKIVSVNPANKEELVGRVSKASRELAEKAMQVADETFQTWRKSKPEMRADILFRAAAIVRRRKHEFSAILVKEAGKPWNEADADTAEAIDFMEYYGRQMLKLKDGIPVESRPIEYNRFSYIPLGVGVIISPWNFPFAIMAGMTTAALVSGNTVLLKPASTTPVVAAKFMEVLEEAGLPAGVVNFVPGNGSEVGDYLVDHPRTRFISFTGSRDVGIRIYERAAKVNPGQIWLKRVIAEMGGKDTIVVDKEADLELAAKSIVASAFGFSGQKCSACSRAVIHEDVYDHVLNRAVELTKELTVANPAVLGTNMGPVNDQAAFDKVMSYVAIGKEEGRILAGGEGDDSKGWFIQPTIVADVAEDARLMKEEIFGPVVAFCKAKDFDHALAIANNTEYGLTGAVISNNRDHIEKAREDFHVGNLYFNRGCTGAIVGYQPFGGFNMSGTDSKAGGPDYLALHMQAKTTSETL</sequence>
<protein>
    <recommendedName>
        <fullName evidence="1">1-pyrroline-5-carboxylate dehydrogenase</fullName>
        <shortName evidence="1">P5C dehydrogenase</shortName>
        <ecNumber evidence="1">1.2.1.88</ecNumber>
    </recommendedName>
    <alternativeName>
        <fullName evidence="1">L-glutamate gamma-semialdehyde dehydrogenase</fullName>
    </alternativeName>
</protein>
<comment type="catalytic activity">
    <reaction evidence="1">
        <text>L-glutamate 5-semialdehyde + NAD(+) + H2O = L-glutamate + NADH + 2 H(+)</text>
        <dbReference type="Rhea" id="RHEA:30235"/>
        <dbReference type="ChEBI" id="CHEBI:15377"/>
        <dbReference type="ChEBI" id="CHEBI:15378"/>
        <dbReference type="ChEBI" id="CHEBI:29985"/>
        <dbReference type="ChEBI" id="CHEBI:57540"/>
        <dbReference type="ChEBI" id="CHEBI:57945"/>
        <dbReference type="ChEBI" id="CHEBI:58066"/>
        <dbReference type="EC" id="1.2.1.88"/>
    </reaction>
</comment>
<comment type="pathway">
    <text evidence="1">Amino-acid degradation; L-proline degradation into L-glutamate; L-glutamate from L-proline: step 2/2.</text>
</comment>
<comment type="similarity">
    <text evidence="1">Belongs to the aldehyde dehydrogenase family. RocA subfamily.</text>
</comment>